<keyword id="KW-0927">Auxin signaling pathway</keyword>
<keyword id="KW-1185">Reference proteome</keyword>
<feature type="chain" id="PRO_0000064780" description="Auxin-induced protein X15">
    <location>
        <begin position="1"/>
        <end position="82"/>
    </location>
</feature>
<proteinExistence type="evidence at transcript level"/>
<sequence length="82" mass="9206">MGFRLPGIRKASNAVDAPKGYLAVYVGEKMKRFVIPVSYMNQPSFQDLLTQAEEEFGYDHPMGGLTIPCSEEVFQRITCCLN</sequence>
<protein>
    <recommendedName>
        <fullName>Auxin-induced protein X15</fullName>
    </recommendedName>
</protein>
<accession>P33082</accession>
<reference key="1">
    <citation type="journal article" date="1989" name="Plant Cell">
        <title>Transcription, organization, and sequence of an auxin-regulated gene cluster in soybean.</title>
        <authorList>
            <person name="McClure B.A."/>
            <person name="Hagen G."/>
            <person name="Brown C.S."/>
            <person name="Gee M.A."/>
            <person name="Guilfoyle T.J."/>
        </authorList>
    </citation>
    <scope>NUCLEOTIDE SEQUENCE [GENOMIC DNA]</scope>
    <source>
        <strain>cv. Wayne</strain>
    </source>
</reference>
<comment type="induction">
    <text>By auxin.</text>
</comment>
<comment type="similarity">
    <text evidence="1">Belongs to the ARG7 family.</text>
</comment>
<evidence type="ECO:0000305" key="1"/>
<name>AXX15_SOYBN</name>
<dbReference type="EMBL" id="S44173">
    <property type="protein sequence ID" value="AAB23280.1"/>
    <property type="molecule type" value="Genomic_DNA"/>
</dbReference>
<dbReference type="PIR" id="JQ1097">
    <property type="entry name" value="JQ1097"/>
</dbReference>
<dbReference type="RefSeq" id="NP_001341752.1">
    <property type="nucleotide sequence ID" value="NM_001354823.2"/>
</dbReference>
<dbReference type="RefSeq" id="XP_025984786.1">
    <property type="nucleotide sequence ID" value="XM_026129001.2"/>
</dbReference>
<dbReference type="PaxDb" id="3847-GLYMA06G43241.1"/>
<dbReference type="EnsemblPlants" id="KRG88475">
    <property type="protein sequence ID" value="KRG88475"/>
    <property type="gene ID" value="GLYMA_U036000"/>
</dbReference>
<dbReference type="EnsemblPlants" id="KRH55778">
    <property type="protein sequence ID" value="KRH55778"/>
    <property type="gene ID" value="GLYMA_06G280800"/>
</dbReference>
<dbReference type="EnsemblPlants" id="KRH55792">
    <property type="protein sequence ID" value="KRH55792"/>
    <property type="gene ID" value="GLYMA_06G282200"/>
</dbReference>
<dbReference type="GeneID" id="100815976"/>
<dbReference type="GeneID" id="113001958"/>
<dbReference type="Gramene" id="KRG88475">
    <property type="protein sequence ID" value="KRG88475"/>
    <property type="gene ID" value="GLYMA_U036000"/>
</dbReference>
<dbReference type="Gramene" id="KRH55778">
    <property type="protein sequence ID" value="KRH55778"/>
    <property type="gene ID" value="GLYMA_06G280800"/>
</dbReference>
<dbReference type="Gramene" id="KRH55792">
    <property type="protein sequence ID" value="KRH55792"/>
    <property type="gene ID" value="GLYMA_06G282200"/>
</dbReference>
<dbReference type="InParanoid" id="P33082"/>
<dbReference type="OMA" id="FHFESII"/>
<dbReference type="OrthoDB" id="1340907at2759"/>
<dbReference type="Proteomes" id="UP000008827">
    <property type="component" value="Chromosome 6"/>
</dbReference>
<dbReference type="Proteomes" id="UP000008827">
    <property type="component" value="Unassembled WGS sequence"/>
</dbReference>
<dbReference type="GO" id="GO:0009734">
    <property type="term" value="P:auxin-activated signaling pathway"/>
    <property type="evidence" value="ECO:0007669"/>
    <property type="project" value="UniProtKB-KW"/>
</dbReference>
<dbReference type="InterPro" id="IPR003676">
    <property type="entry name" value="SAUR_fam"/>
</dbReference>
<dbReference type="PANTHER" id="PTHR31929">
    <property type="entry name" value="SAUR-LIKE AUXIN-RESPONSIVE PROTEIN FAMILY-RELATED"/>
    <property type="match status" value="1"/>
</dbReference>
<dbReference type="Pfam" id="PF02519">
    <property type="entry name" value="Auxin_inducible"/>
    <property type="match status" value="1"/>
</dbReference>
<organism>
    <name type="scientific">Glycine max</name>
    <name type="common">Soybean</name>
    <name type="synonym">Glycine hispida</name>
    <dbReference type="NCBI Taxonomy" id="3847"/>
    <lineage>
        <taxon>Eukaryota</taxon>
        <taxon>Viridiplantae</taxon>
        <taxon>Streptophyta</taxon>
        <taxon>Embryophyta</taxon>
        <taxon>Tracheophyta</taxon>
        <taxon>Spermatophyta</taxon>
        <taxon>Magnoliopsida</taxon>
        <taxon>eudicotyledons</taxon>
        <taxon>Gunneridae</taxon>
        <taxon>Pentapetalae</taxon>
        <taxon>rosids</taxon>
        <taxon>fabids</taxon>
        <taxon>Fabales</taxon>
        <taxon>Fabaceae</taxon>
        <taxon>Papilionoideae</taxon>
        <taxon>50 kb inversion clade</taxon>
        <taxon>NPAAA clade</taxon>
        <taxon>indigoferoid/millettioid clade</taxon>
        <taxon>Phaseoleae</taxon>
        <taxon>Glycine</taxon>
        <taxon>Glycine subgen. Soja</taxon>
    </lineage>
</organism>